<keyword id="KW-0002">3D-structure</keyword>
<keyword id="KW-0903">Direct protein sequencing</keyword>
<keyword id="KW-1015">Disulfide bond</keyword>
<keyword id="KW-0378">Hydrolase</keyword>
<keyword id="KW-0645">Protease</keyword>
<keyword id="KW-0964">Secreted</keyword>
<keyword id="KW-0788">Thiol protease</keyword>
<reference evidence="7" key="1">
    <citation type="thesis" date="1999" institute="Boston University" country="United States">
        <title>Modification of calcite crystal morphology by designed phosphopeptides and primary structures and substrate specificities of the cysteine proteases mexicain and chymomexicain.</title>
        <authorList>
            <person name="Lian Z."/>
        </authorList>
    </citation>
    <scope>PROTEIN SEQUENCE</scope>
    <scope>FUNCTION</scope>
</reference>
<reference key="2">
    <citation type="journal article" date="2007" name="Acta Crystallogr. D">
        <title>Structure of the mexicain-E-64 complex and comparison with other cysteine proteases of the papain family.</title>
        <authorList>
            <person name="Gavira J.A."/>
            <person name="Gonzalez-Ramirez L.A."/>
            <person name="Oliver-Salvador M.C."/>
            <person name="Soriano-Garcia M."/>
            <person name="Garcia-Ruiz J.M."/>
        </authorList>
    </citation>
    <scope>X-RAY CRYSTALLOGRAPHY (2.1 ANGSTROMS) IN COMPLEX WITH E64</scope>
    <scope>DISULFIDE BONDS</scope>
    <scope>ACTIVE SITE</scope>
</reference>
<protein>
    <recommendedName>
        <fullName>Mexicain</fullName>
        <ecNumber evidence="1">3.4.22.-</ecNumber>
    </recommendedName>
</protein>
<dbReference type="EC" id="3.4.22.-" evidence="1"/>
<dbReference type="PDB" id="2BDZ">
    <property type="method" value="X-ray"/>
    <property type="resolution" value="2.10 A"/>
    <property type="chains" value="A/B/C/D=1-214"/>
</dbReference>
<dbReference type="PDBsum" id="2BDZ"/>
<dbReference type="SMR" id="P84346"/>
<dbReference type="EvolutionaryTrace" id="P84346"/>
<dbReference type="GO" id="GO:0005576">
    <property type="term" value="C:extracellular region"/>
    <property type="evidence" value="ECO:0007669"/>
    <property type="project" value="UniProtKB-SubCell"/>
</dbReference>
<dbReference type="GO" id="GO:0008234">
    <property type="term" value="F:cysteine-type peptidase activity"/>
    <property type="evidence" value="ECO:0000314"/>
    <property type="project" value="UniProtKB"/>
</dbReference>
<dbReference type="GO" id="GO:0006508">
    <property type="term" value="P:proteolysis"/>
    <property type="evidence" value="ECO:0007669"/>
    <property type="project" value="UniProtKB-KW"/>
</dbReference>
<dbReference type="CDD" id="cd02248">
    <property type="entry name" value="Peptidase_C1A"/>
    <property type="match status" value="1"/>
</dbReference>
<dbReference type="FunFam" id="3.90.70.10:FF:000408">
    <property type="entry name" value="Mexicain"/>
    <property type="match status" value="1"/>
</dbReference>
<dbReference type="Gene3D" id="3.90.70.10">
    <property type="entry name" value="Cysteine proteinases"/>
    <property type="match status" value="1"/>
</dbReference>
<dbReference type="InterPro" id="IPR038765">
    <property type="entry name" value="Papain-like_cys_pep_sf"/>
</dbReference>
<dbReference type="InterPro" id="IPR000169">
    <property type="entry name" value="Pept_cys_AS"/>
</dbReference>
<dbReference type="InterPro" id="IPR025660">
    <property type="entry name" value="Pept_his_AS"/>
</dbReference>
<dbReference type="InterPro" id="IPR013128">
    <property type="entry name" value="Peptidase_C1A"/>
</dbReference>
<dbReference type="InterPro" id="IPR000668">
    <property type="entry name" value="Peptidase_C1A_C"/>
</dbReference>
<dbReference type="InterPro" id="IPR039417">
    <property type="entry name" value="Peptidase_C1A_papain-like"/>
</dbReference>
<dbReference type="PANTHER" id="PTHR12411">
    <property type="entry name" value="CYSTEINE PROTEASE FAMILY C1-RELATED"/>
    <property type="match status" value="1"/>
</dbReference>
<dbReference type="Pfam" id="PF00112">
    <property type="entry name" value="Peptidase_C1"/>
    <property type="match status" value="1"/>
</dbReference>
<dbReference type="PRINTS" id="PR00705">
    <property type="entry name" value="PAPAIN"/>
</dbReference>
<dbReference type="SMART" id="SM00645">
    <property type="entry name" value="Pept_C1"/>
    <property type="match status" value="1"/>
</dbReference>
<dbReference type="SUPFAM" id="SSF54001">
    <property type="entry name" value="Cysteine proteinases"/>
    <property type="match status" value="1"/>
</dbReference>
<dbReference type="PROSITE" id="PS00139">
    <property type="entry name" value="THIOL_PROTEASE_CYS"/>
    <property type="match status" value="1"/>
</dbReference>
<dbReference type="PROSITE" id="PS00639">
    <property type="entry name" value="THIOL_PROTEASE_HIS"/>
    <property type="match status" value="1"/>
</dbReference>
<feature type="chain" id="PRO_0000050556" description="Mexicain">
    <location>
        <begin position="1"/>
        <end position="214"/>
    </location>
</feature>
<feature type="active site" evidence="2 5">
    <location>
        <position position="25"/>
    </location>
</feature>
<feature type="active site" evidence="3 5">
    <location>
        <position position="159"/>
    </location>
</feature>
<feature type="active site" evidence="4 5">
    <location>
        <position position="175"/>
    </location>
</feature>
<feature type="binding site" description="covalent" evidence="5 8">
    <location>
        <position position="25"/>
    </location>
    <ligand>
        <name>E64</name>
        <dbReference type="ChEBI" id="CHEBI:192370"/>
        <note>inhibitor; produced by Aspergillus japonicus</note>
    </ligand>
</feature>
<feature type="disulfide bond" evidence="5 8">
    <location>
        <begin position="22"/>
        <end position="63"/>
    </location>
</feature>
<feature type="disulfide bond" evidence="5 8">
    <location>
        <begin position="56"/>
        <end position="95"/>
    </location>
</feature>
<feature type="disulfide bond" evidence="5 8">
    <location>
        <begin position="153"/>
        <end position="200"/>
    </location>
</feature>
<feature type="turn" evidence="9">
    <location>
        <begin position="7"/>
        <end position="11"/>
    </location>
</feature>
<feature type="helix" evidence="9">
    <location>
        <begin position="25"/>
        <end position="42"/>
    </location>
</feature>
<feature type="helix" evidence="9">
    <location>
        <begin position="50"/>
        <end position="56"/>
    </location>
</feature>
<feature type="helix" evidence="9">
    <location>
        <begin position="68"/>
        <end position="78"/>
    </location>
</feature>
<feature type="strand" evidence="9">
    <location>
        <begin position="80"/>
        <end position="82"/>
    </location>
</feature>
<feature type="turn" evidence="9">
    <location>
        <begin position="83"/>
        <end position="85"/>
    </location>
</feature>
<feature type="turn" evidence="9">
    <location>
        <begin position="97"/>
        <end position="99"/>
    </location>
</feature>
<feature type="strand" evidence="9">
    <location>
        <begin position="109"/>
        <end position="113"/>
    </location>
</feature>
<feature type="strand" evidence="9">
    <location>
        <begin position="115"/>
        <end position="117"/>
    </location>
</feature>
<feature type="helix" evidence="9">
    <location>
        <begin position="118"/>
        <end position="127"/>
    </location>
</feature>
<feature type="strand" evidence="9">
    <location>
        <begin position="130"/>
        <end position="134"/>
    </location>
</feature>
<feature type="helix" evidence="9">
    <location>
        <begin position="139"/>
        <end position="142"/>
    </location>
</feature>
<feature type="strand" evidence="9">
    <location>
        <begin position="146"/>
        <end position="149"/>
    </location>
</feature>
<feature type="strand" evidence="9">
    <location>
        <begin position="159"/>
        <end position="166"/>
    </location>
</feature>
<feature type="strand" evidence="9">
    <location>
        <begin position="168"/>
        <end position="174"/>
    </location>
</feature>
<feature type="strand" evidence="9">
    <location>
        <begin position="186"/>
        <end position="190"/>
    </location>
</feature>
<feature type="strand" evidence="9">
    <location>
        <begin position="194"/>
        <end position="197"/>
    </location>
</feature>
<feature type="helix" evidence="9">
    <location>
        <begin position="199"/>
        <end position="201"/>
    </location>
</feature>
<feature type="strand" evidence="9">
    <location>
        <begin position="206"/>
        <end position="210"/>
    </location>
</feature>
<organism>
    <name type="scientific">Jacaratia mexicana</name>
    <name type="common">Wild papaya</name>
    <name type="synonym">Pileus mexicanus</name>
    <dbReference type="NCBI Taxonomy" id="309130"/>
    <lineage>
        <taxon>Eukaryota</taxon>
        <taxon>Viridiplantae</taxon>
        <taxon>Streptophyta</taxon>
        <taxon>Embryophyta</taxon>
        <taxon>Tracheophyta</taxon>
        <taxon>Spermatophyta</taxon>
        <taxon>Magnoliopsida</taxon>
        <taxon>eudicotyledons</taxon>
        <taxon>Gunneridae</taxon>
        <taxon>Pentapetalae</taxon>
        <taxon>rosids</taxon>
        <taxon>malvids</taxon>
        <taxon>Brassicales</taxon>
        <taxon>Caricaceae</taxon>
        <taxon>Jacaratia</taxon>
    </lineage>
</organism>
<evidence type="ECO:0000250" key="1">
    <source>
        <dbReference type="UniProtKB" id="P80884"/>
    </source>
</evidence>
<evidence type="ECO:0000255" key="2">
    <source>
        <dbReference type="PROSITE-ProRule" id="PRU10088"/>
    </source>
</evidence>
<evidence type="ECO:0000255" key="3">
    <source>
        <dbReference type="PROSITE-ProRule" id="PRU10089"/>
    </source>
</evidence>
<evidence type="ECO:0000255" key="4">
    <source>
        <dbReference type="PROSITE-ProRule" id="PRU10090"/>
    </source>
</evidence>
<evidence type="ECO:0000269" key="5">
    <source>
    </source>
</evidence>
<evidence type="ECO:0000269" key="6">
    <source ref="1"/>
</evidence>
<evidence type="ECO:0000305" key="7"/>
<evidence type="ECO:0007744" key="8">
    <source>
        <dbReference type="PDB" id="2BDZ"/>
    </source>
</evidence>
<evidence type="ECO:0007829" key="9">
    <source>
        <dbReference type="PDB" id="2BDZ"/>
    </source>
</evidence>
<accession>P84346</accession>
<name>MEX1_JACME</name>
<comment type="function">
    <text evidence="6">Cysteine protease.</text>
</comment>
<comment type="subcellular location">
    <subcellularLocation>
        <location>Secreted</location>
    </subcellularLocation>
</comment>
<comment type="tissue specificity">
    <text>Expressed in latex.</text>
</comment>
<comment type="similarity">
    <text evidence="2 3">Belongs to the peptidase C1 family.</text>
</comment>
<proteinExistence type="evidence at protein level"/>
<sequence>YPESIDWREKGAVTPVKNQNPCGSCWAFSTVATIEGINKIITGQLISLSEQELLDCEYRSHGCDGGYQTPSLQYVVDNGVHTEREYPYEKKQGRCRAKDKKGPKVYITGYKYVPANDEISLIQAIANQPVSVVTDSRGRGFQFYKGGIYEGPCGTNTDHAVTAVGYGKTYLLLKNSWGPNWGEKGYIRIKRASGRSKGTCGVYTSSFFPIKGYR</sequence>